<feature type="chain" id="PRO_0000327604" description="Uridine-cytidine kinase A">
    <location>
        <begin position="1"/>
        <end position="499"/>
    </location>
</feature>
<feature type="region of interest" description="Disordered" evidence="3">
    <location>
        <begin position="1"/>
        <end position="44"/>
    </location>
</feature>
<feature type="compositionally biased region" description="Low complexity" evidence="3">
    <location>
        <begin position="10"/>
        <end position="38"/>
    </location>
</feature>
<feature type="binding site" evidence="2">
    <location>
        <begin position="78"/>
        <end position="85"/>
    </location>
    <ligand>
        <name>ATP</name>
        <dbReference type="ChEBI" id="CHEBI:30616"/>
    </ligand>
</feature>
<keyword id="KW-0067">ATP-binding</keyword>
<keyword id="KW-0418">Kinase</keyword>
<keyword id="KW-0547">Nucleotide-binding</keyword>
<keyword id="KW-1185">Reference proteome</keyword>
<keyword id="KW-0808">Transferase</keyword>
<comment type="function">
    <text evidence="1">Catalyzes the conversion of uridine into uridine monophosphate and cytidine into cytidine monophosphate in the pyrimidine salvage pathway.</text>
</comment>
<comment type="catalytic activity">
    <reaction>
        <text>uridine + ATP = UMP + ADP + H(+)</text>
        <dbReference type="Rhea" id="RHEA:16825"/>
        <dbReference type="ChEBI" id="CHEBI:15378"/>
        <dbReference type="ChEBI" id="CHEBI:16704"/>
        <dbReference type="ChEBI" id="CHEBI:30616"/>
        <dbReference type="ChEBI" id="CHEBI:57865"/>
        <dbReference type="ChEBI" id="CHEBI:456216"/>
        <dbReference type="EC" id="2.7.1.48"/>
    </reaction>
</comment>
<comment type="catalytic activity">
    <reaction>
        <text>cytidine + ATP = CMP + ADP + H(+)</text>
        <dbReference type="Rhea" id="RHEA:24674"/>
        <dbReference type="ChEBI" id="CHEBI:15378"/>
        <dbReference type="ChEBI" id="CHEBI:17562"/>
        <dbReference type="ChEBI" id="CHEBI:30616"/>
        <dbReference type="ChEBI" id="CHEBI:60377"/>
        <dbReference type="ChEBI" id="CHEBI:456216"/>
        <dbReference type="EC" id="2.7.1.48"/>
    </reaction>
</comment>
<comment type="pathway">
    <text>Pyrimidine metabolism; CTP biosynthesis via salvage pathway; CTP from cytidine: step 1/3.</text>
</comment>
<comment type="pathway">
    <text>Pyrimidine metabolism; UMP biosynthesis via salvage pathway; UMP from uridine: step 1/1.</text>
</comment>
<comment type="similarity">
    <text evidence="4">Belongs to the uridine kinase family.</text>
</comment>
<evidence type="ECO:0000250" key="1"/>
<evidence type="ECO:0000255" key="2"/>
<evidence type="ECO:0000256" key="3">
    <source>
        <dbReference type="SAM" id="MobiDB-lite"/>
    </source>
</evidence>
<evidence type="ECO:0000305" key="4"/>
<reference key="1">
    <citation type="journal article" date="2005" name="Nature">
        <title>The genome of the social amoeba Dictyostelium discoideum.</title>
        <authorList>
            <person name="Eichinger L."/>
            <person name="Pachebat J.A."/>
            <person name="Gloeckner G."/>
            <person name="Rajandream M.A."/>
            <person name="Sucgang R."/>
            <person name="Berriman M."/>
            <person name="Song J."/>
            <person name="Olsen R."/>
            <person name="Szafranski K."/>
            <person name="Xu Q."/>
            <person name="Tunggal B."/>
            <person name="Kummerfeld S."/>
            <person name="Madera M."/>
            <person name="Konfortov B.A."/>
            <person name="Rivero F."/>
            <person name="Bankier A.T."/>
            <person name="Lehmann R."/>
            <person name="Hamlin N."/>
            <person name="Davies R."/>
            <person name="Gaudet P."/>
            <person name="Fey P."/>
            <person name="Pilcher K."/>
            <person name="Chen G."/>
            <person name="Saunders D."/>
            <person name="Sodergren E.J."/>
            <person name="Davis P."/>
            <person name="Kerhornou A."/>
            <person name="Nie X."/>
            <person name="Hall N."/>
            <person name="Anjard C."/>
            <person name="Hemphill L."/>
            <person name="Bason N."/>
            <person name="Farbrother P."/>
            <person name="Desany B."/>
            <person name="Just E."/>
            <person name="Morio T."/>
            <person name="Rost R."/>
            <person name="Churcher C.M."/>
            <person name="Cooper J."/>
            <person name="Haydock S."/>
            <person name="van Driessche N."/>
            <person name="Cronin A."/>
            <person name="Goodhead I."/>
            <person name="Muzny D.M."/>
            <person name="Mourier T."/>
            <person name="Pain A."/>
            <person name="Lu M."/>
            <person name="Harper D."/>
            <person name="Lindsay R."/>
            <person name="Hauser H."/>
            <person name="James K.D."/>
            <person name="Quiles M."/>
            <person name="Madan Babu M."/>
            <person name="Saito T."/>
            <person name="Buchrieser C."/>
            <person name="Wardroper A."/>
            <person name="Felder M."/>
            <person name="Thangavelu M."/>
            <person name="Johnson D."/>
            <person name="Knights A."/>
            <person name="Loulseged H."/>
            <person name="Mungall K.L."/>
            <person name="Oliver K."/>
            <person name="Price C."/>
            <person name="Quail M.A."/>
            <person name="Urushihara H."/>
            <person name="Hernandez J."/>
            <person name="Rabbinowitsch E."/>
            <person name="Steffen D."/>
            <person name="Sanders M."/>
            <person name="Ma J."/>
            <person name="Kohara Y."/>
            <person name="Sharp S."/>
            <person name="Simmonds M.N."/>
            <person name="Spiegler S."/>
            <person name="Tivey A."/>
            <person name="Sugano S."/>
            <person name="White B."/>
            <person name="Walker D."/>
            <person name="Woodward J.R."/>
            <person name="Winckler T."/>
            <person name="Tanaka Y."/>
            <person name="Shaulsky G."/>
            <person name="Schleicher M."/>
            <person name="Weinstock G.M."/>
            <person name="Rosenthal A."/>
            <person name="Cox E.C."/>
            <person name="Chisholm R.L."/>
            <person name="Gibbs R.A."/>
            <person name="Loomis W.F."/>
            <person name="Platzer M."/>
            <person name="Kay R.R."/>
            <person name="Williams J.G."/>
            <person name="Dear P.H."/>
            <person name="Noegel A.A."/>
            <person name="Barrell B.G."/>
            <person name="Kuspa A."/>
        </authorList>
    </citation>
    <scope>NUCLEOTIDE SEQUENCE [LARGE SCALE GENOMIC DNA]</scope>
    <source>
        <strain>AX4</strain>
    </source>
</reference>
<reference key="2">
    <citation type="journal article" date="2004" name="Proc. Natl. Acad. Sci. U.S.A.">
        <title>Gene transfer in the evolution of parasite nucleotide biosynthesis.</title>
        <authorList>
            <person name="Striepen B."/>
            <person name="Pruijssers A.J.P."/>
            <person name="Huang J."/>
            <person name="Li C."/>
            <person name="Gubbels M.-J."/>
            <person name="Umejiego N.N."/>
            <person name="Hedstrom L."/>
            <person name="Kissinger J.C."/>
        </authorList>
    </citation>
    <scope>NUCLEOTIDE SEQUENCE [GENOMIC DNA] OF 70-493</scope>
</reference>
<accession>Q55EL3</accession>
<accession>Q6S4W3</accession>
<protein>
    <recommendedName>
        <fullName>Uridine-cytidine kinase A</fullName>
        <ecNumber>2.7.1.48</ecNumber>
    </recommendedName>
    <alternativeName>
        <fullName>Cytidine monophosphokinase A</fullName>
    </alternativeName>
    <alternativeName>
        <fullName>Uridine kinase/uracil phosphoribosyltransferase</fullName>
        <shortName>UK-UPRT</shortName>
    </alternativeName>
    <alternativeName>
        <fullName>Uridine monophosphokinase A</fullName>
    </alternativeName>
</protein>
<organism>
    <name type="scientific">Dictyostelium discoideum</name>
    <name type="common">Social amoeba</name>
    <dbReference type="NCBI Taxonomy" id="44689"/>
    <lineage>
        <taxon>Eukaryota</taxon>
        <taxon>Amoebozoa</taxon>
        <taxon>Evosea</taxon>
        <taxon>Eumycetozoa</taxon>
        <taxon>Dictyostelia</taxon>
        <taxon>Dictyosteliales</taxon>
        <taxon>Dictyosteliaceae</taxon>
        <taxon>Dictyostelium</taxon>
    </lineage>
</organism>
<dbReference type="EC" id="2.7.1.48"/>
<dbReference type="EMBL" id="AAFI02000004">
    <property type="protein sequence ID" value="EAL73106.1"/>
    <property type="molecule type" value="Genomic_DNA"/>
</dbReference>
<dbReference type="EMBL" id="AY466382">
    <property type="protein sequence ID" value="AAS47702.1"/>
    <property type="molecule type" value="Genomic_DNA"/>
</dbReference>
<dbReference type="RefSeq" id="XP_647007.1">
    <property type="nucleotide sequence ID" value="XM_641915.1"/>
</dbReference>
<dbReference type="SMR" id="Q55EL3"/>
<dbReference type="FunCoup" id="Q55EL3">
    <property type="interactions" value="390"/>
</dbReference>
<dbReference type="STRING" id="44689.Q55EL3"/>
<dbReference type="PaxDb" id="44689-DDB0216233"/>
<dbReference type="EnsemblProtists" id="EAL73106">
    <property type="protein sequence ID" value="EAL73106"/>
    <property type="gene ID" value="DDB_G0269034"/>
</dbReference>
<dbReference type="GeneID" id="8616700"/>
<dbReference type="KEGG" id="ddi:DDB_G0269034"/>
<dbReference type="dictyBase" id="DDB_G0269034">
    <property type="gene designation" value="udkA"/>
</dbReference>
<dbReference type="VEuPathDB" id="AmoebaDB:DDB_G0269034"/>
<dbReference type="eggNOG" id="KOG4203">
    <property type="taxonomic scope" value="Eukaryota"/>
</dbReference>
<dbReference type="HOGENOM" id="CLU_021278_0_3_1"/>
<dbReference type="InParanoid" id="Q55EL3"/>
<dbReference type="OMA" id="EPQLHCE"/>
<dbReference type="PhylomeDB" id="Q55EL3"/>
<dbReference type="Reactome" id="R-DDI-73614">
    <property type="pathway name" value="Pyrimidine salvage"/>
</dbReference>
<dbReference type="UniPathway" id="UPA00574">
    <property type="reaction ID" value="UER00637"/>
</dbReference>
<dbReference type="UniPathway" id="UPA00579">
    <property type="reaction ID" value="UER00640"/>
</dbReference>
<dbReference type="PRO" id="PR:Q55EL3"/>
<dbReference type="Proteomes" id="UP000002195">
    <property type="component" value="Chromosome 1"/>
</dbReference>
<dbReference type="GO" id="GO:0005737">
    <property type="term" value="C:cytoplasm"/>
    <property type="evidence" value="ECO:0000318"/>
    <property type="project" value="GO_Central"/>
</dbReference>
<dbReference type="GO" id="GO:0005524">
    <property type="term" value="F:ATP binding"/>
    <property type="evidence" value="ECO:0007669"/>
    <property type="project" value="UniProtKB-KW"/>
</dbReference>
<dbReference type="GO" id="GO:0043771">
    <property type="term" value="F:cytidine kinase activity"/>
    <property type="evidence" value="ECO:0007669"/>
    <property type="project" value="RHEA"/>
</dbReference>
<dbReference type="GO" id="GO:0004849">
    <property type="term" value="F:uridine kinase activity"/>
    <property type="evidence" value="ECO:0000250"/>
    <property type="project" value="dictyBase"/>
</dbReference>
<dbReference type="GO" id="GO:0044211">
    <property type="term" value="P:CTP salvage"/>
    <property type="evidence" value="ECO:0007669"/>
    <property type="project" value="UniProtKB-UniPathway"/>
</dbReference>
<dbReference type="GO" id="GO:0008655">
    <property type="term" value="P:pyrimidine-containing compound salvage"/>
    <property type="evidence" value="ECO:0000250"/>
    <property type="project" value="dictyBase"/>
</dbReference>
<dbReference type="GO" id="GO:0044206">
    <property type="term" value="P:UMP salvage"/>
    <property type="evidence" value="ECO:0007669"/>
    <property type="project" value="UniProtKB-UniPathway"/>
</dbReference>
<dbReference type="CDD" id="cd06223">
    <property type="entry name" value="PRTases_typeI"/>
    <property type="match status" value="1"/>
</dbReference>
<dbReference type="CDD" id="cd02023">
    <property type="entry name" value="UMPK"/>
    <property type="match status" value="1"/>
</dbReference>
<dbReference type="FunFam" id="3.40.50.300:FF:000339">
    <property type="entry name" value="Uridine kinase"/>
    <property type="match status" value="1"/>
</dbReference>
<dbReference type="FunFam" id="3.40.50.2020:FF:000010">
    <property type="entry name" value="Uridine-cytidine kinase"/>
    <property type="match status" value="1"/>
</dbReference>
<dbReference type="Gene3D" id="3.40.50.2020">
    <property type="match status" value="1"/>
</dbReference>
<dbReference type="Gene3D" id="3.40.50.300">
    <property type="entry name" value="P-loop containing nucleotide triphosphate hydrolases"/>
    <property type="match status" value="1"/>
</dbReference>
<dbReference type="InterPro" id="IPR027417">
    <property type="entry name" value="P-loop_NTPase"/>
</dbReference>
<dbReference type="InterPro" id="IPR000836">
    <property type="entry name" value="PRibTrfase_dom"/>
</dbReference>
<dbReference type="InterPro" id="IPR006083">
    <property type="entry name" value="PRK/URK"/>
</dbReference>
<dbReference type="InterPro" id="IPR029057">
    <property type="entry name" value="PRTase-like"/>
</dbReference>
<dbReference type="InterPro" id="IPR000764">
    <property type="entry name" value="Uridine_kinase-like"/>
</dbReference>
<dbReference type="NCBIfam" id="NF001097">
    <property type="entry name" value="PRK00129.1"/>
    <property type="match status" value="1"/>
</dbReference>
<dbReference type="NCBIfam" id="NF004018">
    <property type="entry name" value="PRK05480.1"/>
    <property type="match status" value="1"/>
</dbReference>
<dbReference type="NCBIfam" id="TIGR00235">
    <property type="entry name" value="udk"/>
    <property type="match status" value="1"/>
</dbReference>
<dbReference type="PANTHER" id="PTHR10285">
    <property type="entry name" value="URIDINE KINASE"/>
    <property type="match status" value="1"/>
</dbReference>
<dbReference type="Pfam" id="PF00485">
    <property type="entry name" value="PRK"/>
    <property type="match status" value="1"/>
</dbReference>
<dbReference type="Pfam" id="PF14681">
    <property type="entry name" value="UPRTase"/>
    <property type="match status" value="1"/>
</dbReference>
<dbReference type="PRINTS" id="PR00988">
    <property type="entry name" value="URIDINKINASE"/>
</dbReference>
<dbReference type="SUPFAM" id="SSF52540">
    <property type="entry name" value="P-loop containing nucleoside triphosphate hydrolases"/>
    <property type="match status" value="1"/>
</dbReference>
<dbReference type="SUPFAM" id="SSF53271">
    <property type="entry name" value="PRTase-like"/>
    <property type="match status" value="1"/>
</dbReference>
<sequence>MSDNSTTKVTTNDSPSLTTTTSTTTAPTTTTTTTTTPTHNHDTTIAPGVVKKVYTSGRPPWYDSKGNLKNPLVIGVCGGSASGKTTVCDKIIANLNVRWVVLLSMDSFYKNLSKDNDPSKYNFDHPNAFDYDLMVKTISELRAGKKVNIPKYCFKTHSRLVHQDTVYGADVIILEGILTLYSKELRDLMDIKIFIDTDDDVRLARRLKRDIAERGRTLESVLHQYNTFVKPSFDDYIIPLKKYADIIVPRGSDNIVAINLLTNHIRLKLKERGFDPEKTAQLDLEGLELPSSIHVIKETNQIKAMLSILRNKDTKVGDFVFYSDRLCSLIIEEALTYLPFTEKIVTTPTGSLYHGEELNSRICALVVLRAGGCMEQPLRSICKGIRTGKVLIQSDEMKKPHLFYEKLPNVTDSHVLVLDPTIATGASSEMAIRVLLDHGVPENKIIFVSVIASLKGILYLNYRFPDVQFVVSAIDKELSDEGFILPGCGFYSNRYFGTH</sequence>
<proteinExistence type="inferred from homology"/>
<gene>
    <name type="primary">udkA</name>
    <name type="synonym">ukuprt</name>
    <name type="ORF">DDB_G0269034</name>
</gene>
<name>UCKA_DICDI</name>